<evidence type="ECO:0000250" key="1"/>
<evidence type="ECO:0000255" key="2"/>
<evidence type="ECO:0000269" key="3">
    <source>
    </source>
</evidence>
<evidence type="ECO:0000269" key="4">
    <source>
    </source>
</evidence>
<accession>Q8MZS4</accession>
<reference key="1">
    <citation type="journal article" date="2003" name="Biochem. Biophys. Res. Commun.">
        <title>Structural and enzymatic characterization of physarolisin (formerly physaropepsin) proves that it is a unique serine-carboxyl proteinase.</title>
        <authorList>
            <person name="Nishii W."/>
            <person name="Ueki T."/>
            <person name="Miyashita R."/>
            <person name="Kojima M."/>
            <person name="Kim Y.-T."/>
            <person name="Sasaki N."/>
            <person name="Murakami-Murofushi K."/>
            <person name="Takahashi K."/>
        </authorList>
    </citation>
    <scope>NUCLEOTIDE SEQUENCE [MRNA]</scope>
    <scope>PROTEIN SEQUENCE OF 222-224; 321-345; 390-396; 442-457 AND 545-566</scope>
    <scope>PH DEPENDENCE</scope>
    <scope>ACTIVITY REGULATION</scope>
    <scope>3D-STRUCTURE MODELING</scope>
    <source>
        <strain>Ng-1</strain>
    </source>
</reference>
<reference key="2">
    <citation type="journal article" date="1990" name="J. Biol. Chem.">
        <title>Purification and characterization of a novel intracellular acid proteinase from the plasmodia of a true slime mold, Physarum polycephalum.</title>
        <authorList>
            <person name="Murakami-Murofushi K."/>
            <person name="Takahashi T."/>
            <person name="Minowa Y."/>
            <person name="Iino S."/>
            <person name="Takeuchi T."/>
            <person name="Kitagaki-Ogawa H."/>
            <person name="Murofushi H."/>
            <person name="Takahashi K."/>
        </authorList>
    </citation>
    <scope>PROTEIN SEQUENCE OF 174-193 AND 390-394</scope>
    <scope>CATALYTIC ACTIVITY</scope>
    <scope>ACTIVITY REGULATION</scope>
    <scope>GLYCOSYLATION</scope>
    <scope>KINETIC PARAMETERS</scope>
</reference>
<protein>
    <recommendedName>
        <fullName>Physarolisin</fullName>
        <ecNumber>3.4.21.103</ecNumber>
    </recommendedName>
    <alternativeName>
        <fullName>Physaropepsin</fullName>
    </alternativeName>
    <component>
        <recommendedName>
            <fullName>Physarolisin heavy chain</fullName>
        </recommendedName>
    </component>
    <component>
        <recommendedName>
            <fullName>Physarolisin light chain</fullName>
        </recommendedName>
    </component>
</protein>
<comment type="catalytic activity">
    <reaction evidence="4">
        <text>Milk clotting activity. Preferential cleavage of 8-Gly-|-Ser-9 in B chain of insulin most rapidly, followed by 11-Leu-|-Val-12, 19-Cys(SO(3)H)-|-Gly and 24-Phe-|-Phe-25. No action on Ac-Phe-Tyr(I)2.</text>
        <dbReference type="EC" id="3.4.21.103"/>
    </reaction>
</comment>
<comment type="cofactor">
    <cofactor evidence="1">
        <name>Ca(2+)</name>
        <dbReference type="ChEBI" id="CHEBI:29108"/>
    </cofactor>
    <text evidence="1">Binds 1 Ca(2+) ion per subunit.</text>
</comment>
<comment type="activity regulation">
    <text evidence="3 4">Inhibited by diisopropylfluorophosphate (DFP) and diazoacetyl-D,L-norleucine methyl ester (DAN).</text>
</comment>
<comment type="biophysicochemical properties">
    <kinetics>
        <KM evidence="4">48.3 uM for Lys-Pro-Ile-Glu-Phe+Phe(NO(2))-Arg-Leu</KM>
    </kinetics>
    <phDependence>
        <text evidence="3">Optimum pH is 1.7 with hemoglogin as substrate.</text>
    </phDependence>
</comment>
<comment type="PTM">
    <text>Autocatalytically processed.</text>
</comment>
<comment type="PTM">
    <text evidence="4">N-glycosylated.</text>
</comment>
<keyword id="KW-0106">Calcium</keyword>
<keyword id="KW-0903">Direct protein sequencing</keyword>
<keyword id="KW-0325">Glycoprotein</keyword>
<keyword id="KW-0378">Hydrolase</keyword>
<keyword id="KW-0479">Metal-binding</keyword>
<keyword id="KW-0645">Protease</keyword>
<keyword id="KW-0720">Serine protease</keyword>
<keyword id="KW-0732">Signal</keyword>
<keyword id="KW-0865">Zymogen</keyword>
<sequence>MRLLSLLFLLGLATLSFAVRSQWAQQGRATHEALITIRFALTQQNLDVLERTLLDISDTTSKNYGKWKTAEEVTELVAPAREISERVASFLERQGATKVENFRDMVKVTAPVSWIEETLHTNLFFFQHKTRTSKVIIRADGGYKIPAEIAEHVDFVAGLFEFPSIKNARTQVGAGVDGYIVPYVIFDLYGIPTTFPVHPNSSICLVEFQDDQSYNKDDLKKFAKENEITETVVSHTVGPYSGSSADTESTLDVQYGGAIALNTTVWFWTVEDWMYDFATDFLNTKNPPLVVSMSWGWPEPEQCQVGNCTGDETSLEYVVRTNVEFQKIGAIGTTLLAASGDQGAPGDSDPECNSKKKPLSSIFPGASPWVLSVGATMLSNMTTEDADPSAEPPICKSWTCSTSTTELVCTIPQALITTGGGFSDYSLQPSYQNAAVAAYFKSGVPLPPQTDFNASNRGFPDVSALGHNYLIALSGDFEQVDGTSASTPVFAAIIAHLNSYRLNNGKPPLAFAVPLIYQAFASDPTIFNDITTGDNKCTEDCCSKFGYEATKGWDPVTGVGTPVFSKLLAFVQTLP</sequence>
<dbReference type="EC" id="3.4.21.103"/>
<dbReference type="EMBL" id="AF502290">
    <property type="protein sequence ID" value="AAM27198.1"/>
    <property type="molecule type" value="mRNA"/>
</dbReference>
<dbReference type="SMR" id="Q8MZS4"/>
<dbReference type="MEROPS" id="S53.006"/>
<dbReference type="KEGG" id="ag:AAM27198"/>
<dbReference type="BRENDA" id="3.4.21.103">
    <property type="organism ID" value="4800"/>
</dbReference>
<dbReference type="GO" id="GO:0046872">
    <property type="term" value="F:metal ion binding"/>
    <property type="evidence" value="ECO:0007669"/>
    <property type="project" value="UniProtKB-KW"/>
</dbReference>
<dbReference type="GO" id="GO:0004252">
    <property type="term" value="F:serine-type endopeptidase activity"/>
    <property type="evidence" value="ECO:0007669"/>
    <property type="project" value="InterPro"/>
</dbReference>
<dbReference type="GO" id="GO:0008240">
    <property type="term" value="F:tripeptidyl-peptidase activity"/>
    <property type="evidence" value="ECO:0007669"/>
    <property type="project" value="TreeGrafter"/>
</dbReference>
<dbReference type="GO" id="GO:0006508">
    <property type="term" value="P:proteolysis"/>
    <property type="evidence" value="ECO:0007669"/>
    <property type="project" value="UniProtKB-KW"/>
</dbReference>
<dbReference type="CDD" id="cd04056">
    <property type="entry name" value="Peptidases_S53"/>
    <property type="match status" value="1"/>
</dbReference>
<dbReference type="CDD" id="cd11377">
    <property type="entry name" value="Pro-peptidase_S53"/>
    <property type="match status" value="1"/>
</dbReference>
<dbReference type="FunFam" id="3.40.50.200:FF:000047">
    <property type="entry name" value="Dipeptidyl aminopeptidase"/>
    <property type="match status" value="1"/>
</dbReference>
<dbReference type="Gene3D" id="3.40.50.200">
    <property type="entry name" value="Peptidase S8/S53 domain"/>
    <property type="match status" value="1"/>
</dbReference>
<dbReference type="InterPro" id="IPR000209">
    <property type="entry name" value="Peptidase_S8/S53_dom"/>
</dbReference>
<dbReference type="InterPro" id="IPR036852">
    <property type="entry name" value="Peptidase_S8/S53_dom_sf"/>
</dbReference>
<dbReference type="InterPro" id="IPR023828">
    <property type="entry name" value="Peptidase_S8_Ser-AS"/>
</dbReference>
<dbReference type="InterPro" id="IPR015366">
    <property type="entry name" value="S53_propep"/>
</dbReference>
<dbReference type="InterPro" id="IPR030400">
    <property type="entry name" value="Sedolisin_dom"/>
</dbReference>
<dbReference type="InterPro" id="IPR050819">
    <property type="entry name" value="Tripeptidyl-peptidase_I"/>
</dbReference>
<dbReference type="PANTHER" id="PTHR14218:SF31">
    <property type="entry name" value="PEPTIDASE S53 DOMAIN-CONTAINING PROTEIN"/>
    <property type="match status" value="1"/>
</dbReference>
<dbReference type="PANTHER" id="PTHR14218">
    <property type="entry name" value="PROTEASE S8 TRIPEPTIDYL PEPTIDASE I CLN2"/>
    <property type="match status" value="1"/>
</dbReference>
<dbReference type="Pfam" id="PF00082">
    <property type="entry name" value="Peptidase_S8"/>
    <property type="match status" value="1"/>
</dbReference>
<dbReference type="Pfam" id="PF09286">
    <property type="entry name" value="Pro-kuma_activ"/>
    <property type="match status" value="1"/>
</dbReference>
<dbReference type="SMART" id="SM00944">
    <property type="entry name" value="Pro-kuma_activ"/>
    <property type="match status" value="1"/>
</dbReference>
<dbReference type="SUPFAM" id="SSF54897">
    <property type="entry name" value="Protease propeptides/inhibitors"/>
    <property type="match status" value="1"/>
</dbReference>
<dbReference type="SUPFAM" id="SSF52743">
    <property type="entry name" value="Subtilisin-like"/>
    <property type="match status" value="1"/>
</dbReference>
<dbReference type="PROSITE" id="PS51695">
    <property type="entry name" value="SEDOLISIN"/>
    <property type="match status" value="1"/>
</dbReference>
<name>PHYSA_PHYPO</name>
<feature type="signal peptide" evidence="2">
    <location>
        <begin position="1"/>
        <end position="18"/>
    </location>
</feature>
<feature type="propeptide" id="PRO_0000298946" description="Removed in mature form" evidence="4">
    <location>
        <begin position="19"/>
        <end position="173"/>
    </location>
</feature>
<feature type="chain" id="PRO_0000298947" description="Physarolisin">
    <location>
        <begin position="174"/>
        <end position="575"/>
    </location>
</feature>
<feature type="chain" id="PRO_0000298948" description="Physarolisin heavy chain">
    <location>
        <begin position="174"/>
        <end position="389"/>
    </location>
</feature>
<feature type="chain" id="PRO_0000298949" description="Physarolisin light chain">
    <location>
        <begin position="390"/>
        <end position="575"/>
    </location>
</feature>
<feature type="domain" description="Peptidase S53">
    <location>
        <begin position="179"/>
        <end position="574"/>
    </location>
</feature>
<feature type="active site" description="Charge relay system" evidence="1">
    <location>
        <position position="248"/>
    </location>
</feature>
<feature type="active site" description="Charge relay system" evidence="1">
    <location>
        <position position="252"/>
    </location>
</feature>
<feature type="active site" description="Charge relay system" evidence="1">
    <location>
        <position position="484"/>
    </location>
</feature>
<feature type="binding site" evidence="1">
    <location>
        <position position="529"/>
    </location>
    <ligand>
        <name>Ca(2+)</name>
        <dbReference type="ChEBI" id="CHEBI:29108"/>
    </ligand>
</feature>
<feature type="binding site" evidence="1">
    <location>
        <position position="530"/>
    </location>
    <ligand>
        <name>Ca(2+)</name>
        <dbReference type="ChEBI" id="CHEBI:29108"/>
    </ligand>
</feature>
<feature type="binding site" evidence="1">
    <location>
        <position position="552"/>
    </location>
    <ligand>
        <name>Ca(2+)</name>
        <dbReference type="ChEBI" id="CHEBI:29108"/>
    </ligand>
</feature>
<feature type="binding site" evidence="1">
    <location>
        <position position="554"/>
    </location>
    <ligand>
        <name>Ca(2+)</name>
        <dbReference type="ChEBI" id="CHEBI:29108"/>
    </ligand>
</feature>
<feature type="site" description="DNA-binding">
    <location>
        <position position="529"/>
    </location>
</feature>
<feature type="glycosylation site" description="N-linked (GlcNAc...) asparagine" evidence="2">
    <location>
        <position position="200"/>
    </location>
</feature>
<feature type="glycosylation site" description="N-linked (GlcNAc...) asparagine" evidence="2">
    <location>
        <position position="262"/>
    </location>
</feature>
<feature type="glycosylation site" description="N-linked (GlcNAc...) asparagine" evidence="2">
    <location>
        <position position="307"/>
    </location>
</feature>
<feature type="glycosylation site" description="N-linked (GlcNAc...) asparagine" evidence="2">
    <location>
        <position position="380"/>
    </location>
</feature>
<feature type="glycosylation site" description="N-linked (GlcNAc...) asparagine" evidence="2">
    <location>
        <position position="453"/>
    </location>
</feature>
<organism>
    <name type="scientific">Physarum polycephalum</name>
    <name type="common">Slime mold</name>
    <dbReference type="NCBI Taxonomy" id="5791"/>
    <lineage>
        <taxon>Eukaryota</taxon>
        <taxon>Amoebozoa</taxon>
        <taxon>Evosea</taxon>
        <taxon>Eumycetozoa</taxon>
        <taxon>Myxogastria</taxon>
        <taxon>Myxogastromycetidae</taxon>
        <taxon>Physariida</taxon>
        <taxon>Physaraceae</taxon>
        <taxon>Physarum</taxon>
    </lineage>
</organism>
<proteinExistence type="evidence at protein level"/>